<feature type="chain" id="PRO_0000055910" description="Cyclin-dependent kinase inhibitor FAR1">
    <location>
        <begin position="1"/>
        <end position="830"/>
    </location>
</feature>
<feature type="zinc finger region" description="RING-type" evidence="1">
    <location>
        <begin position="202"/>
        <end position="252"/>
    </location>
</feature>
<feature type="region of interest" description="Disordered" evidence="2">
    <location>
        <begin position="1"/>
        <end position="31"/>
    </location>
</feature>
<feature type="compositionally biased region" description="Basic and acidic residues" evidence="2">
    <location>
        <begin position="8"/>
        <end position="27"/>
    </location>
</feature>
<feature type="modified residue" description="Phosphoserine; by CDC28" evidence="6">
    <location>
        <position position="87"/>
    </location>
</feature>
<feature type="modified residue" description="Phosphoserine" evidence="7">
    <location>
        <position position="110"/>
    </location>
</feature>
<feature type="modified residue" description="Phosphoserine" evidence="7">
    <location>
        <position position="114"/>
    </location>
</feature>
<feature type="modified residue" description="Phosphothreonine" evidence="7">
    <location>
        <position position="306"/>
    </location>
</feature>
<feature type="sequence variant" description="In FAR1-22P; induces cell cycle arrest in the absence of alpha-factor.">
    <original>S</original>
    <variation>P</variation>
    <location>
        <position position="87"/>
    </location>
</feature>
<feature type="mutagenesis site" description="Prevents cell cycle-dependent degradation of FAR1." evidence="5">
    <original>S</original>
    <variation>A</variation>
    <location>
        <position position="87"/>
    </location>
</feature>
<feature type="mutagenesis site" description="Abolishes G1 arrest function." evidence="5">
    <original>T</original>
    <variation>A</variation>
    <location>
        <position position="306"/>
    </location>
</feature>
<feature type="sequence conflict" description="In Ref. 1." evidence="6" ref="1">
    <original>D</original>
    <variation>N</variation>
    <location>
        <position position="20"/>
    </location>
</feature>
<feature type="sequence conflict" description="In Ref. 1; AAA34600." evidence="6" ref="1">
    <original>P</original>
    <variation>R</variation>
    <location>
        <position position="568"/>
    </location>
</feature>
<dbReference type="EMBL" id="M60071">
    <property type="protein sequence ID" value="AAA34600.1"/>
    <property type="status" value="ALT_INIT"/>
    <property type="molecule type" value="Genomic_DNA"/>
</dbReference>
<dbReference type="EMBL" id="Z49432">
    <property type="protein sequence ID" value="CAA89452.1"/>
    <property type="molecule type" value="Genomic_DNA"/>
</dbReference>
<dbReference type="EMBL" id="BK006943">
    <property type="protein sequence ID" value="DAA08646.1"/>
    <property type="molecule type" value="Genomic_DNA"/>
</dbReference>
<dbReference type="PIR" id="S56940">
    <property type="entry name" value="S56940"/>
</dbReference>
<dbReference type="RefSeq" id="NP_012378.1">
    <property type="nucleotide sequence ID" value="NM_001181590.1"/>
</dbReference>
<dbReference type="BioGRID" id="33603">
    <property type="interactions" value="107"/>
</dbReference>
<dbReference type="ComplexPortal" id="CPX-977">
    <property type="entry name" value="CDC24-FAR1-Gbetagamma complex"/>
</dbReference>
<dbReference type="DIP" id="DIP-2229N"/>
<dbReference type="FunCoup" id="P21268">
    <property type="interactions" value="320"/>
</dbReference>
<dbReference type="IntAct" id="P21268">
    <property type="interactions" value="37"/>
</dbReference>
<dbReference type="MINT" id="P21268"/>
<dbReference type="STRING" id="4932.YJL157C"/>
<dbReference type="iPTMnet" id="P21268"/>
<dbReference type="PaxDb" id="4932-YJL157C"/>
<dbReference type="PeptideAtlas" id="P21268"/>
<dbReference type="EnsemblFungi" id="YJL157C_mRNA">
    <property type="protein sequence ID" value="YJL157C"/>
    <property type="gene ID" value="YJL157C"/>
</dbReference>
<dbReference type="GeneID" id="853283"/>
<dbReference type="KEGG" id="sce:YJL157C"/>
<dbReference type="AGR" id="SGD:S000003693"/>
<dbReference type="SGD" id="S000003693">
    <property type="gene designation" value="FAR1"/>
</dbReference>
<dbReference type="VEuPathDB" id="FungiDB:YJL157C"/>
<dbReference type="eggNOG" id="ENOG502QSDX">
    <property type="taxonomic scope" value="Eukaryota"/>
</dbReference>
<dbReference type="HOGENOM" id="CLU_341046_0_0_1"/>
<dbReference type="InParanoid" id="P21268"/>
<dbReference type="OMA" id="FIGMINK"/>
<dbReference type="OrthoDB" id="299997at2759"/>
<dbReference type="BioCyc" id="YEAST:G3O-31597-MONOMER"/>
<dbReference type="BioGRID-ORCS" id="853283">
    <property type="hits" value="1 hit in 10 CRISPR screens"/>
</dbReference>
<dbReference type="PRO" id="PR:P21268"/>
<dbReference type="Proteomes" id="UP000002311">
    <property type="component" value="Chromosome X"/>
</dbReference>
<dbReference type="RNAct" id="P21268">
    <property type="molecule type" value="protein"/>
</dbReference>
<dbReference type="GO" id="GO:0120171">
    <property type="term" value="C:Cdc24p-Far1p-Gbetagamma complex"/>
    <property type="evidence" value="ECO:0000314"/>
    <property type="project" value="SGD"/>
</dbReference>
<dbReference type="GO" id="GO:0005938">
    <property type="term" value="C:cell cortex"/>
    <property type="evidence" value="ECO:0000303"/>
    <property type="project" value="ComplexPortal"/>
</dbReference>
<dbReference type="GO" id="GO:0005737">
    <property type="term" value="C:cytoplasm"/>
    <property type="evidence" value="ECO:0000314"/>
    <property type="project" value="SGD"/>
</dbReference>
<dbReference type="GO" id="GO:0043332">
    <property type="term" value="C:mating projection tip"/>
    <property type="evidence" value="ECO:0000314"/>
    <property type="project" value="SGD"/>
</dbReference>
<dbReference type="GO" id="GO:0005634">
    <property type="term" value="C:nucleus"/>
    <property type="evidence" value="ECO:0000314"/>
    <property type="project" value="SGD"/>
</dbReference>
<dbReference type="GO" id="GO:0004861">
    <property type="term" value="F:cyclin-dependent protein serine/threonine kinase inhibitor activity"/>
    <property type="evidence" value="ECO:0000314"/>
    <property type="project" value="SGD"/>
</dbReference>
<dbReference type="GO" id="GO:0008270">
    <property type="term" value="F:zinc ion binding"/>
    <property type="evidence" value="ECO:0007669"/>
    <property type="project" value="UniProtKB-KW"/>
</dbReference>
<dbReference type="GO" id="GO:0051301">
    <property type="term" value="P:cell division"/>
    <property type="evidence" value="ECO:0007669"/>
    <property type="project" value="UniProtKB-KW"/>
</dbReference>
<dbReference type="GO" id="GO:0043577">
    <property type="term" value="P:chemotropism"/>
    <property type="evidence" value="ECO:0000315"/>
    <property type="project" value="SGD"/>
</dbReference>
<dbReference type="GO" id="GO:0051457">
    <property type="term" value="P:maintenance of protein location in nucleus"/>
    <property type="evidence" value="ECO:0000315"/>
    <property type="project" value="SGD"/>
</dbReference>
<dbReference type="GO" id="GO:0000751">
    <property type="term" value="P:mitotic cell cycle G1 arrest in response to pheromone"/>
    <property type="evidence" value="ECO:0000315"/>
    <property type="project" value="SGD"/>
</dbReference>
<dbReference type="GO" id="GO:0010969">
    <property type="term" value="P:regulation of pheromone-dependent signal transduction involved in conjugation with cellular fusion"/>
    <property type="evidence" value="ECO:0000303"/>
    <property type="project" value="ComplexPortal"/>
</dbReference>
<dbReference type="GO" id="GO:0000749">
    <property type="term" value="P:response to pheromone triggering conjugation with cellular fusion"/>
    <property type="evidence" value="ECO:0000315"/>
    <property type="project" value="SGD"/>
</dbReference>
<dbReference type="InterPro" id="IPR001841">
    <property type="entry name" value="Znf_RING"/>
</dbReference>
<dbReference type="PROSITE" id="PS50089">
    <property type="entry name" value="ZF_RING_2"/>
    <property type="match status" value="1"/>
</dbReference>
<protein>
    <recommendedName>
        <fullName>Cyclin-dependent kinase inhibitor FAR1</fullName>
        <shortName>CKI FAR1</shortName>
    </recommendedName>
    <alternativeName>
        <fullName>Factor arrest protein</fullName>
    </alternativeName>
</protein>
<keyword id="KW-0131">Cell cycle</keyword>
<keyword id="KW-0132">Cell division</keyword>
<keyword id="KW-0479">Metal-binding</keyword>
<keyword id="KW-0597">Phosphoprotein</keyword>
<keyword id="KW-0649">Protein kinase inhibitor</keyword>
<keyword id="KW-1185">Reference proteome</keyword>
<keyword id="KW-0862">Zinc</keyword>
<keyword id="KW-0863">Zinc-finger</keyword>
<gene>
    <name type="primary">FAR1</name>
    <name type="ordered locus">YJL157C</name>
    <name type="ORF">J0565</name>
</gene>
<sequence>MKTPTRVSFEKKIHTPPSGDRDAERSPPKKFLRGLSGKVFRKTPEFKKQQMPTFGYIEESQFTPNLGLMMSKRGNIPKPLNLSKPISPPPSLKKTAGSVASGFSKTGQLSALQSPVNITSSNKYNIKATNLTTSLLRESISDSTTMCDTLSDINLTVMDEDYRIDGDSYYEEDSPTFMISLERNIKKCNSQFSPKRYIGEKCLICEESISSTFTGEKVVESTCSHTSHYNCYLMLFETLYFQGKFPECKICGEVSKPKDKDIVPEMVSKLLTGAGAHDDGPSSNMQQQWIDLKTARSFTGEFPQFTPQEQLIRTADISCDGFRTPRLSNSNQFEAVSYLDSPFLNSPFVNKMATTDPFDLSDDEKLDCDDEIDESAAEVWFSKTGGEHVMVSVKFQEMRTSDDLGVLQDVNHVDHEELEEREKEWKKKIDQYIETNVDKDSEFGSLILFDKLMYSDDGEQWVDNNLVILFSKFLVLFDFEEMKILGKIPRDQFYQVIKFNEDVLLCSLKSTNIPEIYLRFNENCEKWLLPKWKYCLENSSLETLPLSEIVSTVKELSHVNIIGALGAPPDVISAQSHDSRLPWKRLHSDTPLKLIVCLNLSHADGELYRKRVLKSVHQILDGLNTDDLLGIVVVGRDGSGVVGPFGTFIGMINKNWDGWTTFLDNLEVVNPNVFRDEKQQYKVTLQTCERLASTSAYVDTDDHIATGYAKQILVLNGSDVVDIEHDQKLKKAFDQLSYHWRYEISQRRMTPLNASIKQFLEELHTKRYLDVTLRLPQATFEQVYLGDMAAGEQKTRLIMDEHPHSSLIEIEYFDLVKQQRIHQTLEVPNL</sequence>
<accession>P21268</accession>
<accession>D6VW30</accession>
<proteinExistence type="evidence at protein level"/>
<reference key="1">
    <citation type="journal article" date="1990" name="Cell">
        <title>Identification of a gene necessary for cell cycle arrest by a negative growth factor of yeast: FAR1 is an inhibitor of a G1 cyclin, CLN2.</title>
        <authorList>
            <person name="Chang F."/>
            <person name="Herskowitz I."/>
        </authorList>
    </citation>
    <scope>NUCLEOTIDE SEQUENCE [GENOMIC DNA]</scope>
</reference>
<reference key="2">
    <citation type="journal article" date="1995" name="Mol. Cell. Biol.">
        <title>FAR1 and the G1 phase specificity of cell cycle arrest by mating factor in Saccharomyces cerevisiae.</title>
        <authorList>
            <person name="McKinney J.D."/>
            <person name="Cross F.R."/>
        </authorList>
    </citation>
    <scope>SEQUENCE REVISION TO N-TERMINUS</scope>
    <scope>DISRUPTION PHENOTYPE</scope>
</reference>
<reference key="3">
    <citation type="journal article" date="1996" name="EMBO J.">
        <title>Complete nucleotide sequence of Saccharomyces cerevisiae chromosome X.</title>
        <authorList>
            <person name="Galibert F."/>
            <person name="Alexandraki D."/>
            <person name="Baur A."/>
            <person name="Boles E."/>
            <person name="Chalwatzis N."/>
            <person name="Chuat J.-C."/>
            <person name="Coster F."/>
            <person name="Cziepluch C."/>
            <person name="de Haan M."/>
            <person name="Domdey H."/>
            <person name="Durand P."/>
            <person name="Entian K.-D."/>
            <person name="Gatius M."/>
            <person name="Goffeau A."/>
            <person name="Grivell L.A."/>
            <person name="Hennemann A."/>
            <person name="Herbert C.J."/>
            <person name="Heumann K."/>
            <person name="Hilger F."/>
            <person name="Hollenberg C.P."/>
            <person name="Huang M.-E."/>
            <person name="Jacq C."/>
            <person name="Jauniaux J.-C."/>
            <person name="Katsoulou C."/>
            <person name="Kirchrath L."/>
            <person name="Kleine K."/>
            <person name="Kordes E."/>
            <person name="Koetter P."/>
            <person name="Liebl S."/>
            <person name="Louis E.J."/>
            <person name="Manus V."/>
            <person name="Mewes H.-W."/>
            <person name="Miosga T."/>
            <person name="Obermaier B."/>
            <person name="Perea J."/>
            <person name="Pohl T.M."/>
            <person name="Portetelle D."/>
            <person name="Pujol A."/>
            <person name="Purnelle B."/>
            <person name="Ramezani Rad M."/>
            <person name="Rasmussen S.W."/>
            <person name="Rose M."/>
            <person name="Rossau R."/>
            <person name="Schaaff-Gerstenschlaeger I."/>
            <person name="Smits P.H.M."/>
            <person name="Scarcez T."/>
            <person name="Soriano N."/>
            <person name="To Van D."/>
            <person name="Tzermia M."/>
            <person name="Van Broekhoven A."/>
            <person name="Vandenbol M."/>
            <person name="Wedler H."/>
            <person name="von Wettstein D."/>
            <person name="Wambutt R."/>
            <person name="Zagulski M."/>
            <person name="Zollner A."/>
            <person name="Karpfinger-Hartl L."/>
        </authorList>
    </citation>
    <scope>NUCLEOTIDE SEQUENCE [LARGE SCALE GENOMIC DNA]</scope>
    <source>
        <strain>ATCC 204508 / S288c</strain>
    </source>
</reference>
<reference key="4">
    <citation type="journal article" date="2014" name="G3 (Bethesda)">
        <title>The reference genome sequence of Saccharomyces cerevisiae: Then and now.</title>
        <authorList>
            <person name="Engel S.R."/>
            <person name="Dietrich F.S."/>
            <person name="Fisk D.G."/>
            <person name="Binkley G."/>
            <person name="Balakrishnan R."/>
            <person name="Costanzo M.C."/>
            <person name="Dwight S.S."/>
            <person name="Hitz B.C."/>
            <person name="Karra K."/>
            <person name="Nash R.S."/>
            <person name="Weng S."/>
            <person name="Wong E.D."/>
            <person name="Lloyd P."/>
            <person name="Skrzypek M.S."/>
            <person name="Miyasato S.R."/>
            <person name="Simison M."/>
            <person name="Cherry J.M."/>
        </authorList>
    </citation>
    <scope>GENOME REANNOTATION</scope>
    <source>
        <strain>ATCC 204508 / S288c</strain>
    </source>
</reference>
<reference key="5">
    <citation type="journal article" date="1993" name="Curr. Biol.">
        <title>Stop that cell cycle.</title>
        <authorList>
            <person name="Chang F."/>
        </authorList>
    </citation>
    <scope>REVIEW</scope>
</reference>
<reference key="6">
    <citation type="journal article" date="1994" name="Science">
        <title>Direct inhibition of the yeast cyclin-dependent kinase Cdc28-Cln by Far1.</title>
        <authorList>
            <person name="Peter M."/>
            <person name="Herskowitz I."/>
        </authorList>
    </citation>
    <scope>CHARACTERIZATION</scope>
</reference>
<reference key="7">
    <citation type="journal article" date="1995" name="J. Cell Biol.">
        <title>FAR1 is required for oriented polarization of yeast cells in response to mating pheromones.</title>
        <authorList>
            <person name="Valtz N."/>
            <person name="Peter M."/>
            <person name="Herskowitz I."/>
        </authorList>
    </citation>
    <scope>CHARACTERIZATION</scope>
</reference>
<reference key="8">
    <citation type="journal article" date="1997" name="Methods Enzymol.">
        <title>Functional analysis of FAR1 in yeast.</title>
        <authorList>
            <person name="Valtz N."/>
            <person name="Peter M."/>
        </authorList>
    </citation>
    <scope>CHARACTERIZATION</scope>
</reference>
<reference key="9">
    <citation type="journal article" date="1997" name="Genes Dev.">
        <title>Phosphorylation- and ubiquitin-dependent degradation of the cyclin-dependent kinase inhibitor Far1p in budding yeast.</title>
        <authorList>
            <person name="Henchoz S."/>
            <person name="Chi Y."/>
            <person name="Catarin B."/>
            <person name="Herskowitz I."/>
            <person name="Deshaies R.J."/>
            <person name="Peter M."/>
        </authorList>
    </citation>
    <scope>CHARACTERIZATION</scope>
</reference>
<reference key="10">
    <citation type="journal article" date="1998" name="Mol. Cell. Biol.">
        <title>Pheromone-dependent G1 cell cycle arrest requires Far1 phosphorylation, but may not involve inhibition of Cdc28-Cln2 kinase, in vivo.</title>
        <authorList>
            <person name="Gartner A."/>
            <person name="Jovanovic A."/>
            <person name="Jeoung D.I."/>
            <person name="Bourlat S."/>
            <person name="Cross F.R."/>
            <person name="Ammerer G."/>
        </authorList>
    </citation>
    <scope>MUTAGENESIS OF SER-87 AND THR-306</scope>
</reference>
<reference key="11">
    <citation type="journal article" date="2003" name="Nature">
        <title>Global analysis of protein expression in yeast.</title>
        <authorList>
            <person name="Ghaemmaghami S."/>
            <person name="Huh W.-K."/>
            <person name="Bower K."/>
            <person name="Howson R.W."/>
            <person name="Belle A."/>
            <person name="Dephoure N."/>
            <person name="O'Shea E.K."/>
            <person name="Weissman J.S."/>
        </authorList>
    </citation>
    <scope>LEVEL OF PROTEIN EXPRESSION [LARGE SCALE ANALYSIS]</scope>
</reference>
<reference key="12">
    <citation type="journal article" date="2007" name="J. Proteome Res.">
        <title>Large-scale phosphorylation analysis of alpha-factor-arrested Saccharomyces cerevisiae.</title>
        <authorList>
            <person name="Li X."/>
            <person name="Gerber S.A."/>
            <person name="Rudner A.D."/>
            <person name="Beausoleil S.A."/>
            <person name="Haas W."/>
            <person name="Villen J."/>
            <person name="Elias J.E."/>
            <person name="Gygi S.P."/>
        </authorList>
    </citation>
    <scope>PHOSPHORYLATION [LARGE SCALE ANALYSIS] AT SER-110; SER-114 AND THR-306</scope>
    <scope>IDENTIFICATION BY MASS SPECTROMETRY [LARGE SCALE ANALYSIS]</scope>
    <source>
        <strain>ADR376</strain>
    </source>
</reference>
<organism>
    <name type="scientific">Saccharomyces cerevisiae (strain ATCC 204508 / S288c)</name>
    <name type="common">Baker's yeast</name>
    <dbReference type="NCBI Taxonomy" id="559292"/>
    <lineage>
        <taxon>Eukaryota</taxon>
        <taxon>Fungi</taxon>
        <taxon>Dikarya</taxon>
        <taxon>Ascomycota</taxon>
        <taxon>Saccharomycotina</taxon>
        <taxon>Saccharomycetes</taxon>
        <taxon>Saccharomycetales</taxon>
        <taxon>Saccharomycetaceae</taxon>
        <taxon>Saccharomyces</taxon>
    </lineage>
</organism>
<name>FAR1_YEAST</name>
<comment type="function">
    <text>Inhibitor of the cyclin-dependent kinase CDC28. Necessary for cell cycle arrest. Involved in pheromone response. Contributes to mating efficiency. Required for oriented polarization of yeast cells in response to mating pheromones.</text>
</comment>
<comment type="subunit">
    <text>Associates with the CDC28-CLN complex.</text>
</comment>
<comment type="interaction">
    <interactant intactId="EBI-6780">
        <id>P21268</id>
    </interactant>
    <interactant intactId="EBI-4220">
        <id>P11433</id>
        <label>CDC24</label>
    </interactant>
    <organismsDiffer>false</organismsDiffer>
    <experiments>8</experiments>
</comment>
<comment type="interaction">
    <interactant intactId="EBI-6780">
        <id>P21268</id>
    </interactant>
    <interactant intactId="EBI-7390">
        <id>P18851</id>
        <label>STE4</label>
    </interactant>
    <organismsDiffer>false</organismsDiffer>
    <experiments>2</experiments>
</comment>
<comment type="induction">
    <text>By alpha-factor in a cells.</text>
</comment>
<comment type="domain">
    <text>There is evidence to suggest that the N-terminal part may be sufficient for cell cycle arrest and the C-terminal may be necessary for some step in mating.</text>
</comment>
<comment type="PTM">
    <text>Thought to be phosphorylated by MAP kinase FUS3. Thought to enhance the binding of FAR1 to G1-specific cyclin-dependent kinase (CDK) complexes.</text>
</comment>
<comment type="disruption phenotype">
    <text evidence="4">Some mutants appear to be defective in mating because they are unable to locate the mating partner.</text>
</comment>
<comment type="miscellaneous">
    <text evidence="3">Present with 238 molecules/cell in log phase SD medium.</text>
</comment>
<comment type="sequence caution" evidence="6">
    <conflict type="erroneous initiation">
        <sequence resource="EMBL-CDS" id="AAA34600"/>
    </conflict>
</comment>
<evidence type="ECO:0000255" key="1">
    <source>
        <dbReference type="PROSITE-ProRule" id="PRU00175"/>
    </source>
</evidence>
<evidence type="ECO:0000256" key="2">
    <source>
        <dbReference type="SAM" id="MobiDB-lite"/>
    </source>
</evidence>
<evidence type="ECO:0000269" key="3">
    <source>
    </source>
</evidence>
<evidence type="ECO:0000269" key="4">
    <source>
    </source>
</evidence>
<evidence type="ECO:0000269" key="5">
    <source>
    </source>
</evidence>
<evidence type="ECO:0000305" key="6"/>
<evidence type="ECO:0007744" key="7">
    <source>
    </source>
</evidence>